<reference key="1">
    <citation type="journal article" date="2012" name="PLoS ONE">
        <title>Identification and phylogenetic analysis of Tityus pachyurus and Tityus obscurus novel putative Na+-channel scorpion toxins.</title>
        <authorList>
            <person name="Guerrero-Vargas J.A."/>
            <person name="Mourao C.B."/>
            <person name="Quintero-Hernandez V."/>
            <person name="Possani L.D."/>
            <person name="Schwartz E.F."/>
        </authorList>
    </citation>
    <scope>NUCLEOTIDE SEQUENCE [MRNA]</scope>
    <scope>NOMENCLATURE</scope>
    <source>
        <tissue>Venom gland</tissue>
    </source>
</reference>
<name>SCX4_TITPA</name>
<feature type="signal peptide" evidence="2">
    <location>
        <begin position="1"/>
        <end position="19"/>
    </location>
</feature>
<feature type="chain" id="PRO_5000851444" description="Toxin Tpa4">
    <location>
        <begin position="20"/>
        <end position="83"/>
    </location>
</feature>
<feature type="domain" description="LCN-type CS-alpha/beta" evidence="3">
    <location>
        <begin position="21"/>
        <end position="82"/>
    </location>
</feature>
<feature type="modified residue" description="Proline amide" evidence="1">
    <location>
        <position position="83"/>
    </location>
</feature>
<feature type="disulfide bond" evidence="3">
    <location>
        <begin position="31"/>
        <end position="81"/>
    </location>
</feature>
<feature type="disulfide bond" evidence="3">
    <location>
        <begin position="35"/>
        <end position="57"/>
    </location>
</feature>
<feature type="disulfide bond" evidence="3">
    <location>
        <begin position="43"/>
        <end position="64"/>
    </location>
</feature>
<feature type="disulfide bond" evidence="3">
    <location>
        <begin position="47"/>
        <end position="66"/>
    </location>
</feature>
<keyword id="KW-0027">Amidation</keyword>
<keyword id="KW-1015">Disulfide bond</keyword>
<keyword id="KW-0872">Ion channel impairing toxin</keyword>
<keyword id="KW-0528">Neurotoxin</keyword>
<keyword id="KW-0964">Secreted</keyword>
<keyword id="KW-0732">Signal</keyword>
<keyword id="KW-0800">Toxin</keyword>
<keyword id="KW-0738">Voltage-gated sodium channel impairing toxin</keyword>
<sequence length="86" mass="9725">MNYFVLIAVACLLTAGTESKKDGYPLEYDNCAYDCLGYDNKKCDKLCKDKKADSGYCYWAHILCYCYGLPDNEPIKTSGRCRPGKK</sequence>
<protein>
    <recommendedName>
        <fullName>Toxin Tpa4</fullName>
    </recommendedName>
    <alternativeName>
        <fullName>T-alpha* NaTx3.7</fullName>
    </alternativeName>
</protein>
<evidence type="ECO:0000250" key="1"/>
<evidence type="ECO:0000255" key="2"/>
<evidence type="ECO:0000255" key="3">
    <source>
        <dbReference type="PROSITE-ProRule" id="PRU01210"/>
    </source>
</evidence>
<evidence type="ECO:0000305" key="4"/>
<dbReference type="EMBL" id="HE585239">
    <property type="protein sequence ID" value="CCD31433.1"/>
    <property type="molecule type" value="mRNA"/>
</dbReference>
<dbReference type="SMR" id="H1ZZI5"/>
<dbReference type="GO" id="GO:0005576">
    <property type="term" value="C:extracellular region"/>
    <property type="evidence" value="ECO:0007669"/>
    <property type="project" value="UniProtKB-SubCell"/>
</dbReference>
<dbReference type="GO" id="GO:0019871">
    <property type="term" value="F:sodium channel inhibitor activity"/>
    <property type="evidence" value="ECO:0007669"/>
    <property type="project" value="InterPro"/>
</dbReference>
<dbReference type="GO" id="GO:0090729">
    <property type="term" value="F:toxin activity"/>
    <property type="evidence" value="ECO:0007669"/>
    <property type="project" value="UniProtKB-KW"/>
</dbReference>
<dbReference type="GO" id="GO:0006952">
    <property type="term" value="P:defense response"/>
    <property type="evidence" value="ECO:0007669"/>
    <property type="project" value="InterPro"/>
</dbReference>
<dbReference type="CDD" id="cd23106">
    <property type="entry name" value="neurotoxins_LC_scorpion"/>
    <property type="match status" value="1"/>
</dbReference>
<dbReference type="Gene3D" id="3.30.30.10">
    <property type="entry name" value="Knottin, scorpion toxin-like"/>
    <property type="match status" value="1"/>
</dbReference>
<dbReference type="InterPro" id="IPR044062">
    <property type="entry name" value="LCN-type_CS_alpha_beta_dom"/>
</dbReference>
<dbReference type="InterPro" id="IPR003614">
    <property type="entry name" value="Scorpion_toxin-like"/>
</dbReference>
<dbReference type="InterPro" id="IPR036574">
    <property type="entry name" value="Scorpion_toxin-like_sf"/>
</dbReference>
<dbReference type="InterPro" id="IPR018218">
    <property type="entry name" value="Scorpion_toxinL"/>
</dbReference>
<dbReference type="InterPro" id="IPR002061">
    <property type="entry name" value="Scorpion_toxinL/defensin"/>
</dbReference>
<dbReference type="Pfam" id="PF00537">
    <property type="entry name" value="Toxin_3"/>
    <property type="match status" value="1"/>
</dbReference>
<dbReference type="PRINTS" id="PR00285">
    <property type="entry name" value="SCORPNTOXIN"/>
</dbReference>
<dbReference type="SMART" id="SM00505">
    <property type="entry name" value="Knot1"/>
    <property type="match status" value="1"/>
</dbReference>
<dbReference type="SUPFAM" id="SSF57095">
    <property type="entry name" value="Scorpion toxin-like"/>
    <property type="match status" value="1"/>
</dbReference>
<dbReference type="PROSITE" id="PS51863">
    <property type="entry name" value="LCN_CSAB"/>
    <property type="match status" value="1"/>
</dbReference>
<organism>
    <name type="scientific">Tityus pachyurus</name>
    <name type="common">Colombian scorpion</name>
    <dbReference type="NCBI Taxonomy" id="288781"/>
    <lineage>
        <taxon>Eukaryota</taxon>
        <taxon>Metazoa</taxon>
        <taxon>Ecdysozoa</taxon>
        <taxon>Arthropoda</taxon>
        <taxon>Chelicerata</taxon>
        <taxon>Arachnida</taxon>
        <taxon>Scorpiones</taxon>
        <taxon>Buthida</taxon>
        <taxon>Buthoidea</taxon>
        <taxon>Buthidae</taxon>
        <taxon>Tityus</taxon>
    </lineage>
</organism>
<proteinExistence type="evidence at transcript level"/>
<comment type="function">
    <text evidence="1">Alpha toxins bind voltage-independently at site-3 of sodium channels (Nav) and inhibit the inactivation of the activated channels, thereby blocking neuronal transmission.</text>
</comment>
<comment type="subcellular location">
    <subcellularLocation>
        <location evidence="1">Secreted</location>
    </subcellularLocation>
</comment>
<comment type="tissue specificity">
    <text>Expressed by the venom gland.</text>
</comment>
<comment type="domain">
    <text evidence="4">Has the structural arrangement of an alpha-helix connected to antiparallel beta-sheets by disulfide bonds (CS-alpha/beta).</text>
</comment>
<comment type="similarity">
    <text evidence="4">Belongs to the long (4 C-C) scorpion toxin superfamily. Sodium channel inhibitor family. Alpha subfamily.</text>
</comment>
<accession>H1ZZI5</accession>